<accession>B7J3V5</accession>
<reference key="1">
    <citation type="journal article" date="2008" name="BMC Genomics">
        <title>Acidithiobacillus ferrooxidans metabolism: from genome sequence to industrial applications.</title>
        <authorList>
            <person name="Valdes J."/>
            <person name="Pedroso I."/>
            <person name="Quatrini R."/>
            <person name="Dodson R.J."/>
            <person name="Tettelin H."/>
            <person name="Blake R. II"/>
            <person name="Eisen J.A."/>
            <person name="Holmes D.S."/>
        </authorList>
    </citation>
    <scope>NUCLEOTIDE SEQUENCE [LARGE SCALE GENOMIC DNA]</scope>
    <source>
        <strain>ATCC 23270 / DSM 14882 / CIP 104768 / NCIMB 8455</strain>
    </source>
</reference>
<keyword id="KW-0131">Cell cycle</keyword>
<keyword id="KW-0132">Cell division</keyword>
<keyword id="KW-0997">Cell inner membrane</keyword>
<keyword id="KW-1003">Cell membrane</keyword>
<keyword id="KW-0133">Cell shape</keyword>
<keyword id="KW-0961">Cell wall biogenesis/degradation</keyword>
<keyword id="KW-0460">Magnesium</keyword>
<keyword id="KW-0472">Membrane</keyword>
<keyword id="KW-0479">Metal-binding</keyword>
<keyword id="KW-0573">Peptidoglycan synthesis</keyword>
<keyword id="KW-1185">Reference proteome</keyword>
<keyword id="KW-0808">Transferase</keyword>
<keyword id="KW-0812">Transmembrane</keyword>
<keyword id="KW-1133">Transmembrane helix</keyword>
<name>MRAY_ACIF2</name>
<protein>
    <recommendedName>
        <fullName evidence="1">Phospho-N-acetylmuramoyl-pentapeptide-transferase</fullName>
        <ecNumber evidence="1">2.7.8.13</ecNumber>
    </recommendedName>
    <alternativeName>
        <fullName evidence="1">UDP-MurNAc-pentapeptide phosphotransferase</fullName>
    </alternativeName>
</protein>
<gene>
    <name evidence="1" type="primary">mraY</name>
    <name type="ordered locus">AFE_0209</name>
</gene>
<sequence>MLYALFMQLGSLYHGFYVFQYLTLRGVLATLTALVLSLFIGPFFIARLRRYKIGQMVRNDGPETHLIKQGTPTMGGALILLVVILTTLLWSDLGNPLVWVAVLTTLAFGAIGFVDDWRKLRRQNSKGLSARAKYGLQSLVAFAAGGVLYALASNPVETSLILPFIPHVLIPMGAGFIVFSYFVIVGTSNAVNLTDGLDGLAIVPTVMVAGALGVFAYVSGNAVFARYLDVPWVPGSGQMLIFCGALVGAGLGFLWFNTYPADVFMGDTGALALGAALAIVAIVARQELVLFIMGGVFVVETLSVIIQVVSFRLTGKRVFRMAPLHHHFEKKGWPEPRVAVRFWIITVILVLVGLSSLKIR</sequence>
<organism>
    <name type="scientific">Acidithiobacillus ferrooxidans (strain ATCC 23270 / DSM 14882 / CIP 104768 / NCIMB 8455)</name>
    <name type="common">Ferrobacillus ferrooxidans (strain ATCC 23270)</name>
    <dbReference type="NCBI Taxonomy" id="243159"/>
    <lineage>
        <taxon>Bacteria</taxon>
        <taxon>Pseudomonadati</taxon>
        <taxon>Pseudomonadota</taxon>
        <taxon>Acidithiobacillia</taxon>
        <taxon>Acidithiobacillales</taxon>
        <taxon>Acidithiobacillaceae</taxon>
        <taxon>Acidithiobacillus</taxon>
    </lineage>
</organism>
<feature type="chain" id="PRO_1000116501" description="Phospho-N-acetylmuramoyl-pentapeptide-transferase">
    <location>
        <begin position="1"/>
        <end position="360"/>
    </location>
</feature>
<feature type="transmembrane region" description="Helical" evidence="1">
    <location>
        <begin position="26"/>
        <end position="46"/>
    </location>
</feature>
<feature type="transmembrane region" description="Helical" evidence="1">
    <location>
        <begin position="70"/>
        <end position="90"/>
    </location>
</feature>
<feature type="transmembrane region" description="Helical" evidence="1">
    <location>
        <begin position="94"/>
        <end position="114"/>
    </location>
</feature>
<feature type="transmembrane region" description="Helical" evidence="1">
    <location>
        <begin position="136"/>
        <end position="156"/>
    </location>
</feature>
<feature type="transmembrane region" description="Helical" evidence="1">
    <location>
        <begin position="164"/>
        <end position="184"/>
    </location>
</feature>
<feature type="transmembrane region" description="Helical" evidence="1">
    <location>
        <begin position="199"/>
        <end position="219"/>
    </location>
</feature>
<feature type="transmembrane region" description="Helical" evidence="1">
    <location>
        <begin position="236"/>
        <end position="256"/>
    </location>
</feature>
<feature type="transmembrane region" description="Helical" evidence="1">
    <location>
        <begin position="263"/>
        <end position="283"/>
    </location>
</feature>
<feature type="transmembrane region" description="Helical" evidence="1">
    <location>
        <begin position="289"/>
        <end position="309"/>
    </location>
</feature>
<feature type="transmembrane region" description="Helical" evidence="1">
    <location>
        <begin position="339"/>
        <end position="359"/>
    </location>
</feature>
<comment type="function">
    <text evidence="1">Catalyzes the initial step of the lipid cycle reactions in the biosynthesis of the cell wall peptidoglycan: transfers peptidoglycan precursor phospho-MurNAc-pentapeptide from UDP-MurNAc-pentapeptide onto the lipid carrier undecaprenyl phosphate, yielding undecaprenyl-pyrophosphoryl-MurNAc-pentapeptide, known as lipid I.</text>
</comment>
<comment type="catalytic activity">
    <reaction evidence="1">
        <text>UDP-N-acetyl-alpha-D-muramoyl-L-alanyl-gamma-D-glutamyl-meso-2,6-diaminopimeloyl-D-alanyl-D-alanine + di-trans,octa-cis-undecaprenyl phosphate = di-trans,octa-cis-undecaprenyl diphospho-N-acetyl-alpha-D-muramoyl-L-alanyl-D-glutamyl-meso-2,6-diaminopimeloyl-D-alanyl-D-alanine + UMP</text>
        <dbReference type="Rhea" id="RHEA:28386"/>
        <dbReference type="ChEBI" id="CHEBI:57865"/>
        <dbReference type="ChEBI" id="CHEBI:60392"/>
        <dbReference type="ChEBI" id="CHEBI:61386"/>
        <dbReference type="ChEBI" id="CHEBI:61387"/>
        <dbReference type="EC" id="2.7.8.13"/>
    </reaction>
</comment>
<comment type="cofactor">
    <cofactor evidence="1">
        <name>Mg(2+)</name>
        <dbReference type="ChEBI" id="CHEBI:18420"/>
    </cofactor>
</comment>
<comment type="pathway">
    <text evidence="1">Cell wall biogenesis; peptidoglycan biosynthesis.</text>
</comment>
<comment type="subcellular location">
    <subcellularLocation>
        <location evidence="1">Cell inner membrane</location>
        <topology evidence="1">Multi-pass membrane protein</topology>
    </subcellularLocation>
</comment>
<comment type="similarity">
    <text evidence="1">Belongs to the glycosyltransferase 4 family. MraY subfamily.</text>
</comment>
<dbReference type="EC" id="2.7.8.13" evidence="1"/>
<dbReference type="EMBL" id="CP001219">
    <property type="protein sequence ID" value="ACK80503.1"/>
    <property type="molecule type" value="Genomic_DNA"/>
</dbReference>
<dbReference type="RefSeq" id="WP_009567102.1">
    <property type="nucleotide sequence ID" value="NC_011761.1"/>
</dbReference>
<dbReference type="SMR" id="B7J3V5"/>
<dbReference type="STRING" id="243159.AFE_0209"/>
<dbReference type="PaxDb" id="243159-AFE_0209"/>
<dbReference type="GeneID" id="65279594"/>
<dbReference type="KEGG" id="afr:AFE_0209"/>
<dbReference type="eggNOG" id="COG0472">
    <property type="taxonomic scope" value="Bacteria"/>
</dbReference>
<dbReference type="HOGENOM" id="CLU_023982_0_0_6"/>
<dbReference type="UniPathway" id="UPA00219"/>
<dbReference type="Proteomes" id="UP000001362">
    <property type="component" value="Chromosome"/>
</dbReference>
<dbReference type="GO" id="GO:0005886">
    <property type="term" value="C:plasma membrane"/>
    <property type="evidence" value="ECO:0007669"/>
    <property type="project" value="UniProtKB-SubCell"/>
</dbReference>
<dbReference type="GO" id="GO:0046872">
    <property type="term" value="F:metal ion binding"/>
    <property type="evidence" value="ECO:0007669"/>
    <property type="project" value="UniProtKB-KW"/>
</dbReference>
<dbReference type="GO" id="GO:0008963">
    <property type="term" value="F:phospho-N-acetylmuramoyl-pentapeptide-transferase activity"/>
    <property type="evidence" value="ECO:0007669"/>
    <property type="project" value="UniProtKB-UniRule"/>
</dbReference>
<dbReference type="GO" id="GO:0051992">
    <property type="term" value="F:UDP-N-acetylmuramoyl-L-alanyl-D-glutamyl-meso-2,6-diaminopimelyl-D-alanyl-D-alanine:undecaprenyl-phosphate transferase activity"/>
    <property type="evidence" value="ECO:0007669"/>
    <property type="project" value="RHEA"/>
</dbReference>
<dbReference type="GO" id="GO:0051301">
    <property type="term" value="P:cell division"/>
    <property type="evidence" value="ECO:0007669"/>
    <property type="project" value="UniProtKB-KW"/>
</dbReference>
<dbReference type="GO" id="GO:0071555">
    <property type="term" value="P:cell wall organization"/>
    <property type="evidence" value="ECO:0007669"/>
    <property type="project" value="UniProtKB-KW"/>
</dbReference>
<dbReference type="GO" id="GO:0009252">
    <property type="term" value="P:peptidoglycan biosynthetic process"/>
    <property type="evidence" value="ECO:0007669"/>
    <property type="project" value="UniProtKB-UniRule"/>
</dbReference>
<dbReference type="GO" id="GO:0008360">
    <property type="term" value="P:regulation of cell shape"/>
    <property type="evidence" value="ECO:0007669"/>
    <property type="project" value="UniProtKB-KW"/>
</dbReference>
<dbReference type="CDD" id="cd06852">
    <property type="entry name" value="GT_MraY"/>
    <property type="match status" value="1"/>
</dbReference>
<dbReference type="HAMAP" id="MF_00038">
    <property type="entry name" value="MraY"/>
    <property type="match status" value="1"/>
</dbReference>
<dbReference type="InterPro" id="IPR000715">
    <property type="entry name" value="Glycosyl_transferase_4"/>
</dbReference>
<dbReference type="InterPro" id="IPR003524">
    <property type="entry name" value="PNAcMuramoyl-5peptid_Trfase"/>
</dbReference>
<dbReference type="InterPro" id="IPR018480">
    <property type="entry name" value="PNAcMuramoyl-5peptid_Trfase_CS"/>
</dbReference>
<dbReference type="NCBIfam" id="TIGR00445">
    <property type="entry name" value="mraY"/>
    <property type="match status" value="1"/>
</dbReference>
<dbReference type="PANTHER" id="PTHR22926">
    <property type="entry name" value="PHOSPHO-N-ACETYLMURAMOYL-PENTAPEPTIDE-TRANSFERASE"/>
    <property type="match status" value="1"/>
</dbReference>
<dbReference type="PANTHER" id="PTHR22926:SF5">
    <property type="entry name" value="PHOSPHO-N-ACETYLMURAMOYL-PENTAPEPTIDE-TRANSFERASE HOMOLOG"/>
    <property type="match status" value="1"/>
</dbReference>
<dbReference type="Pfam" id="PF00953">
    <property type="entry name" value="Glycos_transf_4"/>
    <property type="match status" value="1"/>
</dbReference>
<dbReference type="PROSITE" id="PS01347">
    <property type="entry name" value="MRAY_1"/>
    <property type="match status" value="1"/>
</dbReference>
<dbReference type="PROSITE" id="PS01348">
    <property type="entry name" value="MRAY_2"/>
    <property type="match status" value="1"/>
</dbReference>
<evidence type="ECO:0000255" key="1">
    <source>
        <dbReference type="HAMAP-Rule" id="MF_00038"/>
    </source>
</evidence>
<proteinExistence type="inferred from homology"/>